<keyword id="KW-0963">Cytoplasm</keyword>
<keyword id="KW-0217">Developmental protein</keyword>
<keyword id="KW-0221">Differentiation</keyword>
<keyword id="KW-0238">DNA-binding</keyword>
<keyword id="KW-0488">Methylation</keyword>
<keyword id="KW-1185">Reference proteome</keyword>
<keyword id="KW-0677">Repeat</keyword>
<keyword id="KW-0694">RNA-binding</keyword>
<keyword id="KW-0744">Spermatogenesis</keyword>
<protein>
    <recommendedName>
        <fullName>Spermatid perinuclear RNA-binding protein</fullName>
    </recommendedName>
</protein>
<dbReference type="EMBL" id="CR860341">
    <property type="protein sequence ID" value="CAH92475.1"/>
    <property type="molecule type" value="mRNA"/>
</dbReference>
<dbReference type="RefSeq" id="NP_001126458.1">
    <property type="nucleotide sequence ID" value="NM_001132986.2"/>
</dbReference>
<dbReference type="SMR" id="Q5R6Y5"/>
<dbReference type="FunCoup" id="Q5R6Y5">
    <property type="interactions" value="1780"/>
</dbReference>
<dbReference type="STRING" id="9601.ENSPPYP00000021950"/>
<dbReference type="GeneID" id="100173445"/>
<dbReference type="KEGG" id="pon:100173445"/>
<dbReference type="CTD" id="55342"/>
<dbReference type="eggNOG" id="KOG3792">
    <property type="taxonomic scope" value="Eukaryota"/>
</dbReference>
<dbReference type="InParanoid" id="Q5R6Y5"/>
<dbReference type="OrthoDB" id="8898434at2759"/>
<dbReference type="Proteomes" id="UP000001595">
    <property type="component" value="Unplaced"/>
</dbReference>
<dbReference type="GO" id="GO:0005737">
    <property type="term" value="C:cytoplasm"/>
    <property type="evidence" value="ECO:0007669"/>
    <property type="project" value="UniProtKB-SubCell"/>
</dbReference>
<dbReference type="GO" id="GO:0071011">
    <property type="term" value="C:precatalytic spliceosome"/>
    <property type="evidence" value="ECO:0007669"/>
    <property type="project" value="TreeGrafter"/>
</dbReference>
<dbReference type="GO" id="GO:0003677">
    <property type="term" value="F:DNA binding"/>
    <property type="evidence" value="ECO:0007669"/>
    <property type="project" value="UniProtKB-KW"/>
</dbReference>
<dbReference type="GO" id="GO:0003725">
    <property type="term" value="F:double-stranded RNA binding"/>
    <property type="evidence" value="ECO:0007669"/>
    <property type="project" value="TreeGrafter"/>
</dbReference>
<dbReference type="GO" id="GO:0003727">
    <property type="term" value="F:single-stranded RNA binding"/>
    <property type="evidence" value="ECO:0007669"/>
    <property type="project" value="TreeGrafter"/>
</dbReference>
<dbReference type="GO" id="GO:0030154">
    <property type="term" value="P:cell differentiation"/>
    <property type="evidence" value="ECO:0007669"/>
    <property type="project" value="UniProtKB-KW"/>
</dbReference>
<dbReference type="GO" id="GO:0007283">
    <property type="term" value="P:spermatogenesis"/>
    <property type="evidence" value="ECO:0007669"/>
    <property type="project" value="UniProtKB-KW"/>
</dbReference>
<dbReference type="CDD" id="cd19897">
    <property type="entry name" value="DSRM_STRBP-like_rpt2"/>
    <property type="match status" value="1"/>
</dbReference>
<dbReference type="CDD" id="cd19909">
    <property type="entry name" value="DSRM_STRBP_rpt1"/>
    <property type="match status" value="1"/>
</dbReference>
<dbReference type="FunFam" id="1.10.1410.40:FF:000001">
    <property type="entry name" value="interleukin enhancer-binding factor 3 isoform X1"/>
    <property type="match status" value="1"/>
</dbReference>
<dbReference type="FunFam" id="3.30.160.20:FF:000006">
    <property type="entry name" value="interleukin enhancer-binding factor 3 isoform X2"/>
    <property type="match status" value="1"/>
</dbReference>
<dbReference type="FunFam" id="3.30.160.20:FF:000008">
    <property type="entry name" value="interleukin enhancer-binding factor 3 isoform X2"/>
    <property type="match status" value="1"/>
</dbReference>
<dbReference type="FunFam" id="3.30.460.10:FF:000003">
    <property type="entry name" value="interleukin enhancer-binding factor 3 isoform X2"/>
    <property type="match status" value="1"/>
</dbReference>
<dbReference type="Gene3D" id="1.10.1410.40">
    <property type="match status" value="1"/>
</dbReference>
<dbReference type="Gene3D" id="3.30.160.20">
    <property type="match status" value="2"/>
</dbReference>
<dbReference type="Gene3D" id="3.30.460.10">
    <property type="entry name" value="Beta Polymerase, domain 2"/>
    <property type="match status" value="1"/>
</dbReference>
<dbReference type="InterPro" id="IPR014720">
    <property type="entry name" value="dsRBD_dom"/>
</dbReference>
<dbReference type="InterPro" id="IPR006561">
    <property type="entry name" value="DZF_dom"/>
</dbReference>
<dbReference type="InterPro" id="IPR049402">
    <property type="entry name" value="DZF_dom_C"/>
</dbReference>
<dbReference type="InterPro" id="IPR049401">
    <property type="entry name" value="DZF_dom_N"/>
</dbReference>
<dbReference type="InterPro" id="IPR043519">
    <property type="entry name" value="NT_sf"/>
</dbReference>
<dbReference type="InterPro" id="IPR044472">
    <property type="entry name" value="STRBP_DSRM_1"/>
</dbReference>
<dbReference type="PANTHER" id="PTHR45762:SF1">
    <property type="entry name" value="SPERMATID PERINUCLEAR RNA-BINDING PROTEIN"/>
    <property type="match status" value="1"/>
</dbReference>
<dbReference type="PANTHER" id="PTHR45762">
    <property type="entry name" value="ZINC FINGER RNA-BINDING PROTEIN"/>
    <property type="match status" value="1"/>
</dbReference>
<dbReference type="Pfam" id="PF00035">
    <property type="entry name" value="dsrm"/>
    <property type="match status" value="2"/>
</dbReference>
<dbReference type="Pfam" id="PF20965">
    <property type="entry name" value="DZF_C"/>
    <property type="match status" value="1"/>
</dbReference>
<dbReference type="Pfam" id="PF07528">
    <property type="entry name" value="DZF_N"/>
    <property type="match status" value="1"/>
</dbReference>
<dbReference type="SMART" id="SM00358">
    <property type="entry name" value="DSRM"/>
    <property type="match status" value="2"/>
</dbReference>
<dbReference type="SMART" id="SM00572">
    <property type="entry name" value="DZF"/>
    <property type="match status" value="1"/>
</dbReference>
<dbReference type="SUPFAM" id="SSF54768">
    <property type="entry name" value="dsRNA-binding domain-like"/>
    <property type="match status" value="2"/>
</dbReference>
<dbReference type="PROSITE" id="PS50137">
    <property type="entry name" value="DS_RBD"/>
    <property type="match status" value="2"/>
</dbReference>
<dbReference type="PROSITE" id="PS51703">
    <property type="entry name" value="DZF"/>
    <property type="match status" value="1"/>
</dbReference>
<reference key="1">
    <citation type="submission" date="2004-11" db="EMBL/GenBank/DDBJ databases">
        <authorList>
            <consortium name="The German cDNA consortium"/>
        </authorList>
    </citation>
    <scope>NUCLEOTIDE SEQUENCE [LARGE SCALE MRNA]</scope>
    <source>
        <tissue>Brain cortex</tissue>
    </source>
</reference>
<gene>
    <name type="primary">STRBP</name>
</gene>
<proteinExistence type="evidence at transcript level"/>
<sequence length="672" mass="73622">MRSIRSFANDDRHVMVKHSTIYPSPEELEAVQNMVSTVECALKHVSDWLDETNKGTKTEGETEVKKDEAGENYSKDQGGRTLCGVMRIGLVAKGLLIKDDMDLELVLMCKDKPTETLLNTVKDNLPIQIQKLTEEKYQVEQCVNEASIIIRNTKEPTLTLKVILTSPLIRDELEKKDGENVSMKDPPDLLDRQKCLNALASLRHAKWFQARANGLKSCVIVLRILRDLCNRVPTWAPLKGWPLELICEKSIGTCNRPLGAGEALRRVMECLASGILLPGGPGLHDPCERDPTDALSYMTIQQKEDITHSAQHALRLSAFGQIYKVLEMDPLPSSKPFQKYSWSVTDKEGAGSSALKRPFEDGLGDDKDPNKKMKRNLRKILDSKAIDLMNALMRLNQIRPGLQYKLLSQSGPVHAPVFTMSVDVDGTTYEASGPSKKTAKLHVAVKVLQAMGYPTGFDADIECMSSDEKSDNESKNETVSSNSSNNTGNSTTETSSTLEVRTQGPILTASGKNPVMELNEKRRGLKYELISETGGSHDKRFVMEVEVDGQKFRGAGPNKKVAKASAALAALEKLFSGPNAANNKKKKIIPQAKGVVNTAVSAAVQAVRGRGRGTLTRGAFVGAAAAPGYIAPGYGTPYGYSTAAPAYGLPKRMVLLPVMKFPTYPVPHYSFF</sequence>
<evidence type="ECO:0000250" key="1"/>
<evidence type="ECO:0000250" key="2">
    <source>
        <dbReference type="UniProtKB" id="Q91WM1"/>
    </source>
</evidence>
<evidence type="ECO:0000255" key="3">
    <source>
        <dbReference type="PROSITE-ProRule" id="PRU00266"/>
    </source>
</evidence>
<evidence type="ECO:0000255" key="4">
    <source>
        <dbReference type="PROSITE-ProRule" id="PRU01040"/>
    </source>
</evidence>
<evidence type="ECO:0000256" key="5">
    <source>
        <dbReference type="SAM" id="MobiDB-lite"/>
    </source>
</evidence>
<organism>
    <name type="scientific">Pongo abelii</name>
    <name type="common">Sumatran orangutan</name>
    <name type="synonym">Pongo pygmaeus abelii</name>
    <dbReference type="NCBI Taxonomy" id="9601"/>
    <lineage>
        <taxon>Eukaryota</taxon>
        <taxon>Metazoa</taxon>
        <taxon>Chordata</taxon>
        <taxon>Craniata</taxon>
        <taxon>Vertebrata</taxon>
        <taxon>Euteleostomi</taxon>
        <taxon>Mammalia</taxon>
        <taxon>Eutheria</taxon>
        <taxon>Euarchontoglires</taxon>
        <taxon>Primates</taxon>
        <taxon>Haplorrhini</taxon>
        <taxon>Catarrhini</taxon>
        <taxon>Hominidae</taxon>
        <taxon>Pongo</taxon>
    </lineage>
</organism>
<comment type="function">
    <text evidence="1">Involved in spermatogenesis and sperm function. Plays a role in regulation of cell growth. Binds to double-stranded DNA and RNA. Binds most efficiently to poly(I:C) RNA than to poly(dI:dC) DNA. Binds also to single-stranded poly(G) RNA. Binds non-specifically to the mRNA PRM1 3'-UTR and adenovirus VA RNA (By similarity).</text>
</comment>
<comment type="subunit">
    <text evidence="1">Interacts with EIF2AK2. Associates with microtubules; it is unsure whether such interaction is direct or indirect.</text>
</comment>
<comment type="subcellular location">
    <subcellularLocation>
        <location evidence="1">Cytoplasm</location>
    </subcellularLocation>
    <text evidence="1">Microtubule-associated that localizes to the manchette in developing spermatids.</text>
</comment>
<name>STRBP_PONAB</name>
<feature type="chain" id="PRO_0000274919" description="Spermatid perinuclear RNA-binding protein">
    <location>
        <begin position="1"/>
        <end position="672"/>
    </location>
</feature>
<feature type="domain" description="DZF" evidence="4">
    <location>
        <begin position="5"/>
        <end position="363"/>
    </location>
</feature>
<feature type="domain" description="DRBM 1" evidence="3">
    <location>
        <begin position="387"/>
        <end position="453"/>
    </location>
</feature>
<feature type="domain" description="DRBM 2" evidence="3">
    <location>
        <begin position="510"/>
        <end position="576"/>
    </location>
</feature>
<feature type="region of interest" description="Disordered" evidence="5">
    <location>
        <begin position="52"/>
        <end position="73"/>
    </location>
</feature>
<feature type="region of interest" description="Disordered" evidence="5">
    <location>
        <begin position="349"/>
        <end position="371"/>
    </location>
</feature>
<feature type="region of interest" description="Disordered" evidence="5">
    <location>
        <begin position="466"/>
        <end position="499"/>
    </location>
</feature>
<feature type="compositionally biased region" description="Basic and acidic residues" evidence="5">
    <location>
        <begin position="357"/>
        <end position="371"/>
    </location>
</feature>
<feature type="compositionally biased region" description="Basic and acidic residues" evidence="5">
    <location>
        <begin position="466"/>
        <end position="476"/>
    </location>
</feature>
<feature type="compositionally biased region" description="Low complexity" evidence="5">
    <location>
        <begin position="477"/>
        <end position="497"/>
    </location>
</feature>
<feature type="modified residue" description="Asymmetric dimethylarginine" evidence="2">
    <location>
        <position position="612"/>
    </location>
</feature>
<feature type="modified residue" description="Asymmetric dimethylarginine" evidence="2">
    <location>
        <position position="617"/>
    </location>
</feature>
<accession>Q5R6Y5</accession>